<name>IHOG_DROMO</name>
<accession>B4KJW1</accession>
<gene>
    <name evidence="1" type="primary">iHog</name>
    <name type="ORF">GI17739</name>
</gene>
<proteinExistence type="inferred from homology"/>
<sequence>MSVTRGHKSTPSLLLLFLSVLTSLLAAIPVLQANAPSAGPGVRILRPPESTVAPSGDEVVFVCETSLPPEHFEWSYASTRSHAPRFKYLKSSSAKNNSNITITNDNDISKLRVIVRPETLGEYRCVAWFGPLAVTSTTARLELATISGDKIAQRSNWRVAAGNTVLWQCGQVVSNPAPTWSFYYNDIEMPAASTLSDSSGTLLLPHVSTASSGTYTCVATNTASGQRLAMPRRLELQVPSAALPSAAPALLPGQSVRTEVLARIGETVLLLCPGVGYPPPTAVWSSPDVTGAVYNNRTRVLPYGLQIGGLQPKDTGTYICYLDNGIRPALEHYIQLVVQQAPRIVRPPSANLTNEGEFMVLECAATGTPTPKIYWLLNGENSVYDTESELPANGSLILRRVQKRHAGCVQCFARNVLGEDSAGTLLQVNPTQIQAGDGMGTGGMGRSSNRNAHNRKQKQMVPPSAPNVTRLSDESVMLRWHVVKNDGLHIQFFKVQYRMTDSGKRKSWQTTNENIPYGKQRHDSDEAVRNFTSSVTGLRPDHSYRFRIMAVYSNNDNKESNTSGKFFLQRGAALAPLPVPELLDIKEYSQTAVMLHWHLPSDADEQLISGYYAYYRPSASAGEYLKATIDGAKARSALISALEPGTIYEFKLQSFSAMAASEFSSLKQGRTQRPRSSTTAQPTMHTVDTTTPTHNETFNMNPLLTGTISGGALLILLVISACLCLCKRRHSRGDNSQNKPRLAELREDFVPLNTCSPNKPRTRHIHITLNPLAQQQQQQLQQQHQQDEKDSQDNELGYFQRQPVVYDAETLGFNGLARMSSSSLRRSQRTLERAAAGGGSGGNNNNLNQATDASLAASLDSPRLQASNKPGRVILKRSRLSSRSENLSSGSLNSVGV</sequence>
<reference evidence="7" key="1">
    <citation type="journal article" date="2007" name="Nature">
        <title>Evolution of genes and genomes on the Drosophila phylogeny.</title>
        <authorList>
            <consortium name="Drosophila 12 genomes consortium"/>
        </authorList>
    </citation>
    <scope>NUCLEOTIDE SEQUENCE [LARGE SCALE GENOMIC DNA]</scope>
    <source>
        <strain evidence="7">Tucson 15081-1352.22</strain>
    </source>
</reference>
<feature type="signal peptide" evidence="2">
    <location>
        <begin position="1"/>
        <end position="26"/>
    </location>
</feature>
<feature type="chain" id="PRO_0000383616" description="Interference hedgehog" evidence="2">
    <location>
        <begin position="27"/>
        <end position="897"/>
    </location>
</feature>
<feature type="topological domain" description="Extracellular" evidence="2">
    <location>
        <begin position="27"/>
        <end position="702"/>
    </location>
</feature>
<feature type="transmembrane region" description="Helical" evidence="2">
    <location>
        <begin position="703"/>
        <end position="723"/>
    </location>
</feature>
<feature type="topological domain" description="Cytoplasmic" evidence="2">
    <location>
        <begin position="724"/>
        <end position="897"/>
    </location>
</feature>
<feature type="domain" description="Ig-like C2-type 1" evidence="2">
    <location>
        <begin position="40"/>
        <end position="147"/>
    </location>
</feature>
<feature type="domain" description="Ig-like C2-type 2" evidence="2">
    <location>
        <begin position="148"/>
        <end position="235"/>
    </location>
</feature>
<feature type="domain" description="Ig-like C2-type 3" evidence="2">
    <location>
        <begin position="244"/>
        <end position="336"/>
    </location>
</feature>
<feature type="domain" description="Ig-like C2-type 4" evidence="2">
    <location>
        <begin position="342"/>
        <end position="429"/>
    </location>
</feature>
<feature type="domain" description="Fibronectin type-III 1" evidence="4">
    <location>
        <begin position="462"/>
        <end position="571"/>
    </location>
</feature>
<feature type="domain" description="Fibronectin type-III 2" evidence="4">
    <location>
        <begin position="579"/>
        <end position="674"/>
    </location>
</feature>
<feature type="region of interest" description="Disordered" evidence="5">
    <location>
        <begin position="434"/>
        <end position="468"/>
    </location>
</feature>
<feature type="region of interest" description="Disordered" evidence="5">
    <location>
        <begin position="666"/>
        <end position="694"/>
    </location>
</feature>
<feature type="region of interest" description="Disordered" evidence="5">
    <location>
        <begin position="773"/>
        <end position="793"/>
    </location>
</feature>
<feature type="region of interest" description="Disordered" evidence="5">
    <location>
        <begin position="819"/>
        <end position="849"/>
    </location>
</feature>
<feature type="compositionally biased region" description="Polar residues" evidence="5">
    <location>
        <begin position="666"/>
        <end position="682"/>
    </location>
</feature>
<feature type="compositionally biased region" description="Low complexity" evidence="5">
    <location>
        <begin position="683"/>
        <end position="694"/>
    </location>
</feature>
<feature type="compositionally biased region" description="Low complexity" evidence="5">
    <location>
        <begin position="774"/>
        <end position="784"/>
    </location>
</feature>
<feature type="binding site" evidence="1">
    <location>
        <position position="498"/>
    </location>
    <ligand>
        <name>heparin</name>
        <dbReference type="ChEBI" id="CHEBI:28304"/>
    </ligand>
</feature>
<feature type="binding site" evidence="1">
    <location>
        <position position="504"/>
    </location>
    <ligand>
        <name>heparin</name>
        <dbReference type="ChEBI" id="CHEBI:28304"/>
    </ligand>
</feature>
<feature type="binding site" evidence="1">
    <location>
        <position position="506"/>
    </location>
    <ligand>
        <name>heparin</name>
        <dbReference type="ChEBI" id="CHEBI:28304"/>
    </ligand>
</feature>
<feature type="binding site" evidence="1">
    <location>
        <position position="545"/>
    </location>
    <ligand>
        <name>heparin</name>
        <dbReference type="ChEBI" id="CHEBI:28304"/>
    </ligand>
</feature>
<feature type="glycosylation site" description="N-linked (GlcNAc...) asparagine" evidence="2">
    <location>
        <position position="96"/>
    </location>
</feature>
<feature type="glycosylation site" description="N-linked (GlcNAc...) asparagine" evidence="2">
    <location>
        <position position="99"/>
    </location>
</feature>
<feature type="glycosylation site" description="N-linked (GlcNAc...) asparagine" evidence="2">
    <location>
        <position position="296"/>
    </location>
</feature>
<feature type="glycosylation site" description="N-linked (GlcNAc...) asparagine" evidence="2">
    <location>
        <position position="351"/>
    </location>
</feature>
<feature type="glycosylation site" description="N-linked (GlcNAc...) asparagine" evidence="2">
    <location>
        <position position="393"/>
    </location>
</feature>
<feature type="glycosylation site" description="N-linked (GlcNAc...) asparagine" evidence="2">
    <location>
        <position position="467"/>
    </location>
</feature>
<feature type="glycosylation site" description="N-linked (GlcNAc...) asparagine" evidence="2">
    <location>
        <position position="530"/>
    </location>
</feature>
<feature type="glycosylation site" description="N-linked (GlcNAc...) asparagine" evidence="2">
    <location>
        <position position="561"/>
    </location>
</feature>
<feature type="glycosylation site" description="N-linked (GlcNAc...) asparagine" evidence="2">
    <location>
        <position position="695"/>
    </location>
</feature>
<feature type="disulfide bond" evidence="3">
    <location>
        <begin position="63"/>
        <end position="125"/>
    </location>
</feature>
<feature type="disulfide bond" evidence="3">
    <location>
        <begin position="169"/>
        <end position="217"/>
    </location>
</feature>
<feature type="disulfide bond" evidence="3">
    <location>
        <begin position="272"/>
        <end position="320"/>
    </location>
</feature>
<feature type="disulfide bond" evidence="3">
    <location>
        <begin position="363"/>
        <end position="411"/>
    </location>
</feature>
<dbReference type="EMBL" id="CH933807">
    <property type="protein sequence ID" value="EDW12564.1"/>
    <property type="molecule type" value="Genomic_DNA"/>
</dbReference>
<dbReference type="SMR" id="B4KJW1"/>
<dbReference type="FunCoup" id="B4KJW1">
    <property type="interactions" value="37"/>
</dbReference>
<dbReference type="GlyCosmos" id="B4KJW1">
    <property type="glycosylation" value="9 sites, No reported glycans"/>
</dbReference>
<dbReference type="EnsemblMetazoa" id="FBtr0168464">
    <property type="protein sequence ID" value="FBpp0166956"/>
    <property type="gene ID" value="FBgn0140480"/>
</dbReference>
<dbReference type="EnsemblMetazoa" id="FBtr0431863">
    <property type="protein sequence ID" value="FBpp0389118"/>
    <property type="gene ID" value="FBgn0140480"/>
</dbReference>
<dbReference type="EnsemblMetazoa" id="XM_002003086.4">
    <property type="protein sequence ID" value="XP_002003122.1"/>
    <property type="gene ID" value="LOC6577153"/>
</dbReference>
<dbReference type="EnsemblMetazoa" id="XM_015165521.3">
    <property type="protein sequence ID" value="XP_015021007.1"/>
    <property type="gene ID" value="LOC6577153"/>
</dbReference>
<dbReference type="GeneID" id="6577153"/>
<dbReference type="KEGG" id="dmo:Dmoj_GI17739"/>
<dbReference type="eggNOG" id="ENOG502QSGM">
    <property type="taxonomic scope" value="Eukaryota"/>
</dbReference>
<dbReference type="HOGENOM" id="CLU_004633_1_0_1"/>
<dbReference type="InParanoid" id="B4KJW1"/>
<dbReference type="OMA" id="CGLMEGK"/>
<dbReference type="OrthoDB" id="9998697at2759"/>
<dbReference type="PhylomeDB" id="B4KJW1"/>
<dbReference type="Proteomes" id="UP000009192">
    <property type="component" value="Unassembled WGS sequence"/>
</dbReference>
<dbReference type="GO" id="GO:0030424">
    <property type="term" value="C:axon"/>
    <property type="evidence" value="ECO:0007669"/>
    <property type="project" value="TreeGrafter"/>
</dbReference>
<dbReference type="GO" id="GO:0009986">
    <property type="term" value="C:cell surface"/>
    <property type="evidence" value="ECO:0007669"/>
    <property type="project" value="EnsemblMetazoa"/>
</dbReference>
<dbReference type="GO" id="GO:0035230">
    <property type="term" value="C:cytoneme"/>
    <property type="evidence" value="ECO:0007669"/>
    <property type="project" value="EnsemblMetazoa"/>
</dbReference>
<dbReference type="GO" id="GO:0016020">
    <property type="term" value="C:membrane"/>
    <property type="evidence" value="ECO:0000250"/>
    <property type="project" value="UniProtKB"/>
</dbReference>
<dbReference type="GO" id="GO:0005886">
    <property type="term" value="C:plasma membrane"/>
    <property type="evidence" value="ECO:0007669"/>
    <property type="project" value="EnsemblMetazoa"/>
</dbReference>
<dbReference type="GO" id="GO:0015026">
    <property type="term" value="F:coreceptor activity"/>
    <property type="evidence" value="ECO:0007669"/>
    <property type="project" value="EnsemblMetazoa"/>
</dbReference>
<dbReference type="GO" id="GO:0097108">
    <property type="term" value="F:hedgehog family protein binding"/>
    <property type="evidence" value="ECO:0007669"/>
    <property type="project" value="EnsemblMetazoa"/>
</dbReference>
<dbReference type="GO" id="GO:0008201">
    <property type="term" value="F:heparin binding"/>
    <property type="evidence" value="ECO:0000250"/>
    <property type="project" value="UniProtKB"/>
</dbReference>
<dbReference type="GO" id="GO:0005113">
    <property type="term" value="F:patched binding"/>
    <property type="evidence" value="ECO:0007669"/>
    <property type="project" value="EnsemblMetazoa"/>
</dbReference>
<dbReference type="GO" id="GO:0042803">
    <property type="term" value="F:protein homodimerization activity"/>
    <property type="evidence" value="ECO:0000250"/>
    <property type="project" value="UniProtKB"/>
</dbReference>
<dbReference type="GO" id="GO:0007411">
    <property type="term" value="P:axon guidance"/>
    <property type="evidence" value="ECO:0007669"/>
    <property type="project" value="TreeGrafter"/>
</dbReference>
<dbReference type="GO" id="GO:0048749">
    <property type="term" value="P:compound eye development"/>
    <property type="evidence" value="ECO:0007669"/>
    <property type="project" value="EnsemblMetazoa"/>
</dbReference>
<dbReference type="GO" id="GO:0035017">
    <property type="term" value="P:cuticle pattern formation"/>
    <property type="evidence" value="ECO:0007669"/>
    <property type="project" value="EnsemblMetazoa"/>
</dbReference>
<dbReference type="GO" id="GO:0034109">
    <property type="term" value="P:homotypic cell-cell adhesion"/>
    <property type="evidence" value="ECO:0007669"/>
    <property type="project" value="EnsemblMetazoa"/>
</dbReference>
<dbReference type="GO" id="GO:0071694">
    <property type="term" value="P:maintenance of protein location in extracellular region"/>
    <property type="evidence" value="ECO:0007669"/>
    <property type="project" value="EnsemblMetazoa"/>
</dbReference>
<dbReference type="GO" id="GO:0007379">
    <property type="term" value="P:segment specification"/>
    <property type="evidence" value="ECO:0007669"/>
    <property type="project" value="EnsemblMetazoa"/>
</dbReference>
<dbReference type="GO" id="GO:0007224">
    <property type="term" value="P:smoothened signaling pathway"/>
    <property type="evidence" value="ECO:0000250"/>
    <property type="project" value="UniProtKB"/>
</dbReference>
<dbReference type="GO" id="GO:0048100">
    <property type="term" value="P:wing disc anterior/posterior pattern formation"/>
    <property type="evidence" value="ECO:0007669"/>
    <property type="project" value="EnsemblMetazoa"/>
</dbReference>
<dbReference type="CDD" id="cd00063">
    <property type="entry name" value="FN3"/>
    <property type="match status" value="2"/>
</dbReference>
<dbReference type="FunFam" id="2.60.40.10:FF:001723">
    <property type="entry name" value="Interference hedgehog"/>
    <property type="match status" value="1"/>
</dbReference>
<dbReference type="FunFam" id="2.60.40.10:FF:001747">
    <property type="entry name" value="Interference hedgehog"/>
    <property type="match status" value="1"/>
</dbReference>
<dbReference type="FunFam" id="2.60.40.10:FF:001773">
    <property type="entry name" value="Interference hedgehog"/>
    <property type="match status" value="1"/>
</dbReference>
<dbReference type="FunFam" id="2.60.40.10:FF:002071">
    <property type="entry name" value="Interference hedgehog"/>
    <property type="match status" value="1"/>
</dbReference>
<dbReference type="Gene3D" id="2.60.40.10">
    <property type="entry name" value="Immunoglobulins"/>
    <property type="match status" value="6"/>
</dbReference>
<dbReference type="InterPro" id="IPR003961">
    <property type="entry name" value="FN3_dom"/>
</dbReference>
<dbReference type="InterPro" id="IPR036116">
    <property type="entry name" value="FN3_sf"/>
</dbReference>
<dbReference type="InterPro" id="IPR007110">
    <property type="entry name" value="Ig-like_dom"/>
</dbReference>
<dbReference type="InterPro" id="IPR036179">
    <property type="entry name" value="Ig-like_dom_sf"/>
</dbReference>
<dbReference type="InterPro" id="IPR013783">
    <property type="entry name" value="Ig-like_fold"/>
</dbReference>
<dbReference type="InterPro" id="IPR003599">
    <property type="entry name" value="Ig_sub"/>
</dbReference>
<dbReference type="InterPro" id="IPR003598">
    <property type="entry name" value="Ig_sub2"/>
</dbReference>
<dbReference type="InterPro" id="IPR013151">
    <property type="entry name" value="Immunoglobulin_dom"/>
</dbReference>
<dbReference type="PANTHER" id="PTHR44170:SF33">
    <property type="entry name" value="BROTHER OF IHOG, ISOFORM G-RELATED"/>
    <property type="match status" value="1"/>
</dbReference>
<dbReference type="PANTHER" id="PTHR44170">
    <property type="entry name" value="PROTEIN SIDEKICK"/>
    <property type="match status" value="1"/>
</dbReference>
<dbReference type="Pfam" id="PF00041">
    <property type="entry name" value="fn3"/>
    <property type="match status" value="2"/>
</dbReference>
<dbReference type="Pfam" id="PF00047">
    <property type="entry name" value="ig"/>
    <property type="match status" value="1"/>
</dbReference>
<dbReference type="Pfam" id="PF13927">
    <property type="entry name" value="Ig_3"/>
    <property type="match status" value="2"/>
</dbReference>
<dbReference type="SMART" id="SM00060">
    <property type="entry name" value="FN3"/>
    <property type="match status" value="2"/>
</dbReference>
<dbReference type="SMART" id="SM00409">
    <property type="entry name" value="IG"/>
    <property type="match status" value="4"/>
</dbReference>
<dbReference type="SMART" id="SM00408">
    <property type="entry name" value="IGc2"/>
    <property type="match status" value="3"/>
</dbReference>
<dbReference type="SUPFAM" id="SSF49265">
    <property type="entry name" value="Fibronectin type III"/>
    <property type="match status" value="1"/>
</dbReference>
<dbReference type="SUPFAM" id="SSF48726">
    <property type="entry name" value="Immunoglobulin"/>
    <property type="match status" value="4"/>
</dbReference>
<dbReference type="PROSITE" id="PS50853">
    <property type="entry name" value="FN3"/>
    <property type="match status" value="2"/>
</dbReference>
<dbReference type="PROSITE" id="PS50835">
    <property type="entry name" value="IG_LIKE"/>
    <property type="match status" value="4"/>
</dbReference>
<organism>
    <name type="scientific">Drosophila mojavensis</name>
    <name type="common">Fruit fly</name>
    <dbReference type="NCBI Taxonomy" id="7230"/>
    <lineage>
        <taxon>Eukaryota</taxon>
        <taxon>Metazoa</taxon>
        <taxon>Ecdysozoa</taxon>
        <taxon>Arthropoda</taxon>
        <taxon>Hexapoda</taxon>
        <taxon>Insecta</taxon>
        <taxon>Pterygota</taxon>
        <taxon>Neoptera</taxon>
        <taxon>Endopterygota</taxon>
        <taxon>Diptera</taxon>
        <taxon>Brachycera</taxon>
        <taxon>Muscomorpha</taxon>
        <taxon>Ephydroidea</taxon>
        <taxon>Drosophilidae</taxon>
        <taxon>Drosophila</taxon>
    </lineage>
</organism>
<protein>
    <recommendedName>
        <fullName evidence="1">Interference hedgehog</fullName>
    </recommendedName>
</protein>
<evidence type="ECO:0000250" key="1">
    <source>
        <dbReference type="UniProtKB" id="Q9VM64"/>
    </source>
</evidence>
<evidence type="ECO:0000255" key="2"/>
<evidence type="ECO:0000255" key="3">
    <source>
        <dbReference type="PROSITE-ProRule" id="PRU00114"/>
    </source>
</evidence>
<evidence type="ECO:0000255" key="4">
    <source>
        <dbReference type="PROSITE-ProRule" id="PRU00316"/>
    </source>
</evidence>
<evidence type="ECO:0000256" key="5">
    <source>
        <dbReference type="SAM" id="MobiDB-lite"/>
    </source>
</evidence>
<evidence type="ECO:0000305" key="6"/>
<evidence type="ECO:0000312" key="7">
    <source>
        <dbReference type="EMBL" id="EDW12564.1"/>
    </source>
</evidence>
<comment type="function">
    <text evidence="1">Mediates response to the active Hedgehog (Hh) protein signal in embryos, functioning upstream or at the level of patched (ptc).</text>
</comment>
<comment type="subunit">
    <text evidence="1">Homodimer. Heterotetramer; 2 iHog chains bind 2 hh chains when facilitated by heparin, heparin is required to promote high-affinity interactions between hh and iHog (By similarity).</text>
</comment>
<comment type="subcellular location">
    <subcellularLocation>
        <location evidence="2">Membrane</location>
        <topology evidence="1 2">Single-pass type I membrane protein</topology>
    </subcellularLocation>
</comment>
<comment type="domain">
    <text evidence="1">The first fibronectin type-III domain mediates a specific interaction with Hh protein, in vitro. The second fibronectin type-III domain is additionally required for in vivo signaling activity (By similarity).</text>
</comment>
<comment type="similarity">
    <text evidence="2 6">Belongs to the immunoglobulin superfamily. IHOG family.</text>
</comment>
<keyword id="KW-1015">Disulfide bond</keyword>
<keyword id="KW-0325">Glycoprotein</keyword>
<keyword id="KW-0358">Heparin-binding</keyword>
<keyword id="KW-0393">Immunoglobulin domain</keyword>
<keyword id="KW-0472">Membrane</keyword>
<keyword id="KW-0654">Proteoglycan</keyword>
<keyword id="KW-1185">Reference proteome</keyword>
<keyword id="KW-0677">Repeat</keyword>
<keyword id="KW-0732">Signal</keyword>
<keyword id="KW-0812">Transmembrane</keyword>
<keyword id="KW-1133">Transmembrane helix</keyword>